<sequence>MHRTNEMERKRVFTEICAEALKVEIDDLDETRSWVALGGDSMATIRLIARCEERGMRAKTADVIRCASITELFETIQYLQPSESIDREEVKPEDADAAPFSLWPEYHNATTTEEKQKLLNEVARHCNSTPNDIEDVYPSTPLQEGLMAITSRSPAAYVDRRAFTLPPTVDIARFRAALEALTARTHILRTRIIIDPLSGRSLQVVTRNEVVWREAMTLNDYLEDDRQEGIALGQPLSRCGLIQDKGSDGVEETVFVWTVHHSIYDGWSALQLYRQLAAIYNSEQLSPVVPYTRFVRYLQQQDPDSATQYWRDQLQGEDIMVDWPTLPTATYQPRPRTQFQANILLPDVSGSGLVMMSAVLRGAWALVMAQYSGYSDVIFGVTLSGRNAPVPQVADITAPLITTVPVRIRVDQKLTVAEFLDRIQTQATEMIEYEHTGLQQIMTFLPEYASALDFRNLLIIQPAVERDAYRAFPGISPINIPVEDFDSYGLNVECTLGREQIDIQLNYDEGVITTAALTNVMEQFSTLVRKMCRPDAQATSINEILTLPAQDAEQIKKWNADVPSPVHRCIHDLVQDQVRSQPAAIAVDAWDGRFTYAELASQSMRLAQHLTISHGVGPEQTIGLCMDKSRWAVVAMLAILYAGGAVLPLSGSHPLPRLQGIVEDANTRVILVDASQAARLVGMGRPLVIVDSTIVENLSPAQNEMRSGVTPSNMAWVVYTSGSTGMPKGVVLEHQSLCTSLTAHAKAIGITEHTRTLQFAAYTFDVSIMDTFSTLQAGGCVCVPSEEERLNRLAEAAARLEVNYAELTSTVTEMLSPSQVPSLTTLLLSGEPLKPAVLSIWAKHARVFNSYGPTECSITASNSRQLFHPDEARNIGAPMESLFWVVQSDNHQALCPIGTPGELLIEGPLLARGYLNDETTTNDSFITEPRFPEQIGLERTGRRMYRTGDLVQQNRDGSLLYVGRCGGQQVKIRGQRVDVSEVEHQITQRLPGVKTVAVELVGQGSQLSLMAVIEFAGGTSVTAAPVFEALREQLLHALPQYMVPTLYMPTDQMPINASGKLDRRGLRAQLQALTIAELQEYALNAGPKSAPSTAIEHKLQVLWAETLKVDPACIGREDSFVLLGGDSIAAMRMASLPAAQELHLSVADIFQHARLSDLARELEGRNLNENMQEADPAPFALWDTKQNQRAQRVAILAAQCGVTAGEVEDIIPCTAMQEGLMALTTHQPTAYVGRQVYRLAASIDTQRFQEAWKTLVYHTPILRTRLAVDEASDPQTGGLVQIVVGDGLTWKYSTDLDEYLACDEAEGMALGQPLVRLALVQQKEERFFIFTGHHSVYDGWSASLMFQRLAEIYLHNRIHSSPVPYSRFIRHLLKQDPVSTAGYWSTQLEGEAVVDWPPLPRADYQPRPMHRATHTITLPDNAKISTRGLSKLPHTLRAAWALVMATYAGGQGNRVVFGATVSGRNAPIRGITEMVGPTITTVPVAVQLDTQQTVSQFLEAVQKQAADMIPFEQTGLQIIRKLVPASCHATLELRNLFLVQPLPDGEETDLPGLASLPVTLEGFDTYGLTVQCSLGPDAVTVEMRYDENVIASARVKRIMNCFDHVVNQLYSKRNGAVPLGDLSLLSADDSTTIARWNQTSPERIERCIHHLIEEQITARPDSQAICAWDGDLTYAELNTQATQLSWYLRGLKVDAERMVGICMDKSKFAGVAMLAVLQAGGVVVPLGVNHPPSRNEGIVEDTAIDIILVDEQQRDRLSTMPNVQLVVIEQSLLDTLTIQPIERELPVNVTPNNAAWVIYTSGSTGKPKGVVLQHRALCSSIRAHGARFKMGPHTRMLQFAAHTFDACIQDYFTTLAFGGVVCVPSEHERMSDLSTAVRKLGVTFATLTSTVARLIDPNDVSAMQQLALVGEPVKADVVKRWLDHVTVLNAYGPSECSIHSTCSEPLTDPKQSAIIGTGMGSRVWVADVRDYNRLCPIGVPGELLIEGPILAREYLNDPQKTEKAFITNPAFLEELGISCNSNEGRMYRTGDLVRLDEHGSLTHLGRRDTQIKIRGQRVEVGEIEYQITQQLAGVRSAAVELLEDAGKVRLTVALDFALDSDLRRGPASELGVLLPSPALTTGLQRLRGSLFQVLPIYMVPTAFLPIMDMPLNASGKLDRRAVRALLEKVSFEEQRQYLAVSASESTVTPSTPTESQLRAVWADMLQLPVTQVNIHDNFFQLGGDSVVAMRMVATESARALKLTVADIFQSPRLTDLANLLSSRFLKEEQDEEEYMAEDDPEPFSLWYANEDLQRRHEQLQQIAQDCDVRVSSIQDVYPCTPLQEAMMAITSRQSAAYINRQVFELDDSIDVDRLQSAWRKLAQAVPTLRTRIAMSPGKASTLVQVVVDEEIEWQVSGSLEGYLERDQEQGMALGTPLIRFGLIHKDVSGQRFLVWTAHHSLYDGWSSRLIYQHLADIYHAGRVLDSPASFPRFIRFLAEQDNAEVRSASAKYWSEELEGEVMSNWPPLPHVDYQPRPGREIIKVVPLRQSGPSQVITPANVVRAAWAITMAQYAGHDDVVFAATVSGRNAPVWQVGNIVAPTITTVPVRTHIDWTDNITSFLDTIQKQAADMIPYEHTGLRTIKAIIPPQLGPALDLRNVLVVQTEGEGKTGAAPFPGVEPFSLGAAVDFDSHGLTVDCTVSATNLRVAFRFDETVLPTTHAENILSHFTHVVQQLCDPLLVKGRTLGDMDLVSPGDRTCIFERNDTVDISRWDACIHDLVGKQALAQPNAPAVCAWDGDLSYKELASYASRLAHQLIALGVGPEKKVGLCLDKSRWAVVAMLATLQAGGAIVPLGVSHPFSRVEVMVEDSAAVVILVDEQQHHRLADLPSNIPRVIVDSQSLEKLPPQSAPVTEVSPDNAAWINYTSGSTGAPKGMILEHGGLCTSMRTQSARMHISNKTRALQFSPFTFDVSISDISATLIYGGCVCLPSESDRMNNLAGSIQTMAVNFASLTPTVARLLSPAEVPTLKTLALTGEALKPDVVALWKIVPDVALYNTYGPSEGSVCTCNGPISSPEEAESIGTPMATRHWVTQPHNYHQLSPIGAPGELLIEGPLIARGYLNNPEKTAASFVPPPGFLTKPSGSRIYRTGDLVRQNTDGSFTYLGRRDTQVKIRGQRVEIGEIEHQIVNHLASVQTAVVHLLEAIGLVAVVELREAETVAEIEPAGTIAPSPALCSQFSDLRQALLRVLPDYMAPALFVPVPSIPTNVSGKLDRRAVHELLMSLPTDNLGRWTAEQENMPKAILQPATEMEKMLQELWARMLKIPADNVSPQDDFFRLGGDSVTAMRMVATATRTSRHLRLVVTDIFQHPRLSELAQVLEERVQKDLEQRDIQSTEPIDPEPFALFADGSDLDAQGREQRLAAVAEQCSVAVEQVQDVYPCTPLQEGLLANTSRQQAAYVSRQSYVLSNNIDLARFKAAWEALAKAAPILRTRIVIGAEGSCQVVVKGPIEWLHHSGALEDYIQQDKAREMGLGQPLARYAIVQELSGEQFFVWTAHHSMYDGWTVRLLCQELINLYNREDHVPRPVPYTRFIRYLYEINRAGSLEFWKQQLEGDDVEADWPRLPHVGYEPRPRSTLSVNIADPGNDESSGIVIANILRAAWGLVMAQFSGHNDIVYAANVSGRTAPVPGVTDIIGPTIATVPVRMHFNPRALMTVESFLHGVQTQSQQMIDHEQTGLIAMRNHPNLQLRNLLVIQPADEGDTVLDFPGIEAVPSAVEDFDSYGVNIECVLGMTIRVQARFDDHIVAATYMKRVLDQFAYIVEQLCDPRLRALPLQQLNLLSPNDQQQISSWNAAAPESVEQCVHEMVEEQAMAHPTKLAVWAWDGKFTYQELAHLAQLLADQLVSLGIGPERMVGVCMDKSKWAAVAFLAILKAGGVVVPLGVSHPIRRIETILNDTMSDLVLVDAKHCQRLSVEGLLRQRLLVVDDKLQQHGSSRPRAGQQAKPITPDHAAWVIYTSGTTGLPKGAVLDHRALSSSIRAHGTRYKFGPQTRKLQYSAHLFDGTIEDYFTTLSWGGLCCVPSEDDRLDMRRLTAFMRETEVNALATTYTVAGLLTPEEVPSLQTLVLGGEPATVEVTDTWRSKVDLFNCYGPSECTVFSSAAGPRVAVAELHNIGHPIGTRLWVVNPDNPGSLCPVGAPGELLIEGPQLARGYLNDEAKTRTAFLTDLEFMRQFKIPPSTRVYRSGDIVRQKDDGSFVYVARRNTMQVKIRGQRVEVGEIEHQVGLHLAETRAVAVELLKQGVHGLPVLVAVVDFADNSQYRLADGDQKPTPKEELLPPTPAAQQAFTKLQVALSQVLPSHMIPSIYLPVTQLPRNISGKLDRRALRELLDQLSYEAIHQYMDIDGGEKAAPATAMERTLQSLWAQTLGMDIDRIGAHDNFFQLGGDSVAAMRLAAIVQQQEQLQLTVGDILSHPCLSDLANLLADGAPTEGTTETDPEPFSLWCTVPDEDLPTIAVKLGVAVEQIEDIYPATPLQEGFIAVTARQSAAYISRQVYKLSATLLDLDRFKASWETLVNTTPILRTRLSIGRDGHAVQVVVRDSIGWRYGTDLSSYVAQDREEGMRLDEPLMRYAIITEPTSGSCYFVWTAHHSIYDAWTIRAISKSLAEIYTSTSPHSIPQPTASFSRFIRYLTNTDTDAIKDFWHEQLAGDVVADWPPLPQNDYQSLPRGRIQKTIKIPERSSGILESTTLRGAWSIVMSQYAGSSDVVFAATVSGRNAPVPQINDIAGPTLTTVPVRVSVDSSLSVNQFLQSIQQQSTDMIPYEQTGLQRIKASLPEANQSALNLRNLLVIQLAAEAESNTLALPGWEAQPAPFEDFGSFGLQIECTPIPGSHAIDVNIQYDEKVISTTAVTRVAEHFVHVAEQLFNPGLINSALTEIQLQLSSEHKDVMLRQNTHVPPYLNRCIQEMVYERAALQPNAPAICAWDGNWTYAEVTDLAASFASYLSTELQIGPTQMVGVCMDKSKWAVVAMLAILCAGGTVVPLGVNHPLSRIQVMAQDTGLGVILVDNKQRERLFDLNHRLITVDAQHIQGLPVLGKQERTSMTQKTGVTPDDIAWIIYTSGSTGIPKGVMLEHRALATSMEAHGSTFGFGTHTRILQFAAHTFDATIQDMFTTLYKGGCVCIPSEYDRVNRLTESMASMSVNCATLTSTVASLLAPEELPSMQTIILVGEPVTPAAVALWLPHATVLNAYGPSECSIHSSCSDPITDPALAPNIGRPLATNFWVVDPNNYHSLRPIGAPGELLIEGPIQARGYLNDIDKTNAAFVIDPDFMKQLGLSGSQRRLYRTGDLVRQNDNGTLTHMGRRDLQVKIRGQRVEVGEVEYQIQRKLPSARTVAVEPLQHGDKDKHITLIAIMDLSDRAVTDELNAAKAPEPLPVTASLQATFHDLRNSLLQVLPAYMVPAAYLPVDRMPMNASNKLDRRAIRELITHHSLEDLQQYLGGGTDDNVKTAPRTVMEQQVHALWVEVLGLSEDAVGVYDNFLQLGGDSLTAMRIVAAAGQTGEVRVSVEDIFMHPTVADLALVLSERGSSDRAVEQEQEDPAPYQLWTEQNNFPADQIEENLEAIAAQCAVDRALIEDVYPCTPLQAGLMAITARQPAAYVSRQVYTMSSSIVDRATFQKAWQQLAAGTDILRTRIVMAPDSSSQALQVVVRDTIHWELGTNLDEYLRRDSERGMALGEPLVRYGIVEEPSGKSYFIWTAHHALYDGWTLGALSKRLGDIYQNRALSTQSVPYSRFIRYLQHGRSSLESSASYWREQLQGDAMANWPRRPALDYQPMPRHNLQRTISLGSSQTLVTTSTILRAAWALVIAQYAGHNDVVFAATVSGRSAPVAGIADIPAPTITTVPVRIRVDGNRSVADYLQAVQRQAIDMIYYEHTGLQTIKALVPDLASTLDAGSLMVIQPTDQSAMESGLDFPGLDMVPMPIAPFNSHGVTLECKLGAQDVTLDIHYDSNIIAPEQLSLVIDYFASLVLRLGNPAATSSPVADLLAVSEKDERQIRAWNSTVPPRLDKCIHEMVQEQVARTPGEIAIQAWDGQLTYREFHDLAASLAHHLAALGVGPETLVGVCMAKSKWGAVAMLAIMQAGGAIMPLGVSQPVARIQNILETSQAAFILVDEEQMDRLNQLSTPGQTPKLIFVEDLLMEIPSYTQPPATDVTPDNASWAIFTSGSTGTPKGVIIEHGTMSTSLDEQGRWLGLSQETRFLQFASYTFDNVITDTFATTSFGGCVCIPSESGRMDRLEEVMVEMKVNTAMLTSTVAQQLSPTQLPLMQKLILTGEPVRPDVVRTWLDHAEIYNAYGPTEGSMSTCTRPYTNAFEASNIGHPLATRLWVVQPDNPHLLSAIGAPGELYIEGPFLARGYLNDPVKTDALFLMDPPFTQRLGLTGRRVYRTGDLVQQNEDGTLIHLGRHDSQVKIRGQRVEISEIEHQITQHLPEASTVAVFILDDNPITLVAAVEFNMKSPHRLGPHSAFKGLLAPTVAMRVDFTRLYGALSQVLPIYMVPTVFIPMHEMSRNLSGKLDRRLVQTLLKEIPTTELRRYRLGEGPKIAPSTAMERQLQSIWSKALDLPEDQVGAHDNFFHIGGDSLVAMRIIAIARAQKLKLTVADLFKYPCLSEVAQVVEDRVAASSITLAVDEEPIAPSPFSLIAAENIEIYLQRIASRMPGCRAQDIVDILPTTDFQALTVAEALTTPGTANFAHFFLDGDGSCDVEALRKSCLQLIEAMPELRTAYVFDQGRLLQVVLRVYEPEIKILQTNDATMEEVTSDLISKQMFQAPHLGQPFTVITIIEESASSRHRVVLRLTHAEYDAVSMQSIWRQLRALYEGTTLKPRPTFASFLYSQRQKITTQTYNYWRTLLDESTMTPLSTPTPMPTSTIGHYPSKVAQLRPCRVHINRSSVEGITSAVFIKTAWAIALSRLSNRQDIIFADTVSSRGTVDESLMEATGCCVTLLPVRVKLTPETSMQDVLLELRTQQVQSLERAQLGFREILHECTNWPTSTRFTSAINCISQGGNGAFTMRGTNYWLSNFQANNATWTVDLGVTAVMHDNGDVDLRMAYLPTRISEDAAYKYLNTLQDTLQAILDSPGLLVSNFLSRALGGSLGDRKGASDPKIEVIEPEQEPQPLESTDKMTYLDLKKTPEWEEVLRGRRGIVSPGRTSLSFSQRGGDLLDALYLSSLQKDADGGRYISPMALLEGSRCEEAEKSASVTSSERRLATI</sequence>
<feature type="chain" id="PRO_0000443826" description="Nonribosomal peptide synthetase ecdA">
    <location>
        <begin position="1"/>
        <end position="7260"/>
    </location>
</feature>
<feature type="domain" description="Carrier 1" evidence="2 4">
    <location>
        <begin position="4"/>
        <end position="80"/>
    </location>
</feature>
<feature type="domain" description="Carrier 2" evidence="2 4">
    <location>
        <begin position="1090"/>
        <end position="1166"/>
    </location>
</feature>
<feature type="domain" description="Carrier 3" evidence="2 7">
    <location>
        <begin position="2188"/>
        <end position="2264"/>
    </location>
</feature>
<feature type="domain" description="Carrier 4" evidence="2 7">
    <location>
        <begin position="3287"/>
        <end position="3365"/>
    </location>
</feature>
<feature type="domain" description="Carrier 5" evidence="2 7">
    <location>
        <begin position="4394"/>
        <end position="4471"/>
    </location>
</feature>
<feature type="domain" description="Carrier 6" evidence="2 7">
    <location>
        <begin position="5496"/>
        <end position="5573"/>
    </location>
</feature>
<feature type="domain" description="Carrier 7" evidence="2 7">
    <location>
        <begin position="6592"/>
        <end position="6668"/>
    </location>
</feature>
<feature type="region of interest" description="Condensation 1" evidence="1 7">
    <location>
        <begin position="134"/>
        <end position="549"/>
    </location>
</feature>
<feature type="region of interest" description="Adenylation 1" evidence="1 4">
    <location>
        <begin position="575"/>
        <end position="965"/>
    </location>
</feature>
<feature type="region of interest" description="Condensation 2" evidence="1 7">
    <location>
        <begin position="1208"/>
        <end position="1628"/>
    </location>
</feature>
<feature type="region of interest" description="Adenylation 2" evidence="1 7">
    <location>
        <begin position="1653"/>
        <end position="2054"/>
    </location>
</feature>
<feature type="region of interest" description="Condensation 3" evidence="1 7">
    <location>
        <begin position="2314"/>
        <end position="2719"/>
    </location>
</feature>
<feature type="region of interest" description="Adenylation 3" evidence="1 7">
    <location>
        <begin position="2763"/>
        <end position="3156"/>
    </location>
</feature>
<feature type="region of interest" description="Condensation 4" evidence="1 7">
    <location>
        <begin position="3417"/>
        <end position="3831"/>
    </location>
</feature>
<feature type="region of interest" description="Adenylation 4" evidence="1 7">
    <location>
        <begin position="3851"/>
        <end position="4248"/>
    </location>
</feature>
<feature type="region of interest" description="Condensation 5" evidence="1 7">
    <location>
        <begin position="4510"/>
        <end position="4910"/>
    </location>
</feature>
<feature type="region of interest" description="Adenylation 5" evidence="1 7">
    <location>
        <begin position="4955"/>
        <end position="5357"/>
    </location>
</feature>
<feature type="region of interest" description="Condensation 6" evidence="1 7">
    <location>
        <begin position="5622"/>
        <end position="6043"/>
    </location>
</feature>
<feature type="region of interest" description="Adenylation 6" evidence="1 7">
    <location>
        <begin position="6063"/>
        <end position="6460"/>
    </location>
</feature>
<feature type="region of interest" description="Condensation 7" evidence="1 7">
    <location>
        <begin position="6718"/>
        <end position="7133"/>
    </location>
</feature>
<feature type="region of interest" description="Disordered" evidence="3">
    <location>
        <begin position="7241"/>
        <end position="7260"/>
    </location>
</feature>
<feature type="modified residue" description="O-(pantetheine 4'-phosphoryl)serine" evidence="2">
    <location>
        <position position="41"/>
    </location>
</feature>
<feature type="modified residue" description="O-(pantetheine 4'-phosphoryl)serine" evidence="2">
    <location>
        <position position="1127"/>
    </location>
</feature>
<feature type="modified residue" description="O-(pantetheine 4'-phosphoryl)serine" evidence="2">
    <location>
        <position position="2225"/>
    </location>
</feature>
<feature type="modified residue" description="O-(pantetheine 4'-phosphoryl)serine" evidence="2">
    <location>
        <position position="3324"/>
    </location>
</feature>
<feature type="modified residue" description="O-(pantetheine 4'-phosphoryl)serine" evidence="2">
    <location>
        <position position="4431"/>
    </location>
</feature>
<feature type="modified residue" description="O-(pantetheine 4'-phosphoryl)serine" evidence="2">
    <location>
        <position position="5533"/>
    </location>
</feature>
<feature type="modified residue" description="O-(pantetheine 4'-phosphoryl)serine" evidence="2">
    <location>
        <position position="6629"/>
    </location>
</feature>
<feature type="mutagenesis site" description="Prevents loading of linoleate by the initiation T0 domain." evidence="4">
    <original>S</original>
    <variation>A</variation>
    <location>
        <position position="41"/>
    </location>
</feature>
<feature type="mutagenesis site" description="Prevents loading of L-ornithine by the T1 domain." evidence="4">
    <original>S</original>
    <variation>A</variation>
    <location>
        <position position="1127"/>
    </location>
</feature>
<keyword id="KW-0413">Isomerase</keyword>
<keyword id="KW-0436">Ligase</keyword>
<keyword id="KW-0596">Phosphopantetheine</keyword>
<keyword id="KW-0597">Phosphoprotein</keyword>
<keyword id="KW-0677">Repeat</keyword>
<organism>
    <name type="scientific">Aspergillus rugulosus</name>
    <name type="common">Emericella rugulosa</name>
    <dbReference type="NCBI Taxonomy" id="41736"/>
    <lineage>
        <taxon>Eukaryota</taxon>
        <taxon>Fungi</taxon>
        <taxon>Dikarya</taxon>
        <taxon>Ascomycota</taxon>
        <taxon>Pezizomycotina</taxon>
        <taxon>Eurotiomycetes</taxon>
        <taxon>Eurotiomycetidae</taxon>
        <taxon>Eurotiales</taxon>
        <taxon>Aspergillaceae</taxon>
        <taxon>Aspergillus</taxon>
        <taxon>Aspergillus subgen. Nidulantes</taxon>
    </lineage>
</organism>
<protein>
    <recommendedName>
        <fullName evidence="5">Nonribosomal peptide synthetase ecdA</fullName>
        <shortName evidence="5">NRPS ecdA</shortName>
        <ecNumber evidence="7">6.3.2.-</ecNumber>
    </recommendedName>
    <alternativeName>
        <fullName evidence="5">Echinocandin B biosynthetic cluster protein A</fullName>
    </alternativeName>
</protein>
<proteinExistence type="evidence at protein level"/>
<reference key="1">
    <citation type="journal article" date="2012" name="J. Am. Chem. Soc.">
        <title>Identification and characterization of the echinocandin B biosynthetic gene cluster from Emericella rugulosa NRRL 11440.</title>
        <authorList>
            <person name="Cacho R.A."/>
            <person name="Jiang W."/>
            <person name="Chooi Y.H."/>
            <person name="Walsh C.T."/>
            <person name="Tang Y."/>
        </authorList>
    </citation>
    <scope>NUCLEOTIDE SEQUENCE [GENOMIC DNA]</scope>
    <scope>FUNCTION</scope>
    <scope>DISRUPTION PHENOTYPE</scope>
    <scope>PATHWAY</scope>
    <scope>BIOPHYSICOCHEMICAL PROPERTIES</scope>
    <scope>MUTAGENESIS OF SER-41 AND SER-1127</scope>
    <scope>BIOTECHNOLOGY</scope>
    <source>
        <strain>ATCC 58397 / NRRL 11440</strain>
    </source>
</reference>
<gene>
    <name evidence="5" type="primary">ecdA</name>
</gene>
<dbReference type="EC" id="6.3.2.-" evidence="7"/>
<dbReference type="EMBL" id="JX421684">
    <property type="protein sequence ID" value="AFT91378.1"/>
    <property type="molecule type" value="Genomic_DNA"/>
</dbReference>
<dbReference type="SMR" id="K0E4D7"/>
<dbReference type="BioCyc" id="MetaCyc:MONOMER-19231"/>
<dbReference type="GO" id="GO:0005737">
    <property type="term" value="C:cytoplasm"/>
    <property type="evidence" value="ECO:0007669"/>
    <property type="project" value="TreeGrafter"/>
</dbReference>
<dbReference type="GO" id="GO:0016853">
    <property type="term" value="F:isomerase activity"/>
    <property type="evidence" value="ECO:0007669"/>
    <property type="project" value="UniProtKB-KW"/>
</dbReference>
<dbReference type="GO" id="GO:0016874">
    <property type="term" value="F:ligase activity"/>
    <property type="evidence" value="ECO:0007669"/>
    <property type="project" value="UniProtKB-KW"/>
</dbReference>
<dbReference type="GO" id="GO:0031177">
    <property type="term" value="F:phosphopantetheine binding"/>
    <property type="evidence" value="ECO:0007669"/>
    <property type="project" value="InterPro"/>
</dbReference>
<dbReference type="GO" id="GO:0043041">
    <property type="term" value="P:amino acid activation for nonribosomal peptide biosynthetic process"/>
    <property type="evidence" value="ECO:0007669"/>
    <property type="project" value="TreeGrafter"/>
</dbReference>
<dbReference type="GO" id="GO:0044550">
    <property type="term" value="P:secondary metabolite biosynthetic process"/>
    <property type="evidence" value="ECO:0007669"/>
    <property type="project" value="TreeGrafter"/>
</dbReference>
<dbReference type="CDD" id="cd05918">
    <property type="entry name" value="A_NRPS_SidN3_like"/>
    <property type="match status" value="6"/>
</dbReference>
<dbReference type="CDD" id="cd19542">
    <property type="entry name" value="CT_NRPS-like"/>
    <property type="match status" value="1"/>
</dbReference>
<dbReference type="CDD" id="cd19545">
    <property type="entry name" value="FUM14_C_NRPS-like"/>
    <property type="match status" value="6"/>
</dbReference>
<dbReference type="FunFam" id="3.40.50.980:FF:000001">
    <property type="entry name" value="Non-ribosomal peptide synthetase"/>
    <property type="match status" value="1"/>
</dbReference>
<dbReference type="FunFam" id="3.30.300.30:FF:000015">
    <property type="entry name" value="Nonribosomal peptide synthase SidD"/>
    <property type="match status" value="6"/>
</dbReference>
<dbReference type="FunFam" id="3.30.559.30:FF:000003">
    <property type="entry name" value="Nonribosomal peptide synthase SidD"/>
    <property type="match status" value="5"/>
</dbReference>
<dbReference type="FunFam" id="1.10.1200.10:FF:000005">
    <property type="entry name" value="Nonribosomal peptide synthetase 1"/>
    <property type="match status" value="5"/>
</dbReference>
<dbReference type="FunFam" id="3.40.50.12780:FF:000014">
    <property type="entry name" value="Nonribosomal peptide synthetase 1"/>
    <property type="match status" value="5"/>
</dbReference>
<dbReference type="Gene3D" id="3.30.300.30">
    <property type="match status" value="6"/>
</dbReference>
<dbReference type="Gene3D" id="3.40.50.980">
    <property type="match status" value="2"/>
</dbReference>
<dbReference type="Gene3D" id="1.10.1200.10">
    <property type="entry name" value="ACP-like"/>
    <property type="match status" value="7"/>
</dbReference>
<dbReference type="Gene3D" id="3.30.559.10">
    <property type="entry name" value="Chloramphenicol acetyltransferase-like domain"/>
    <property type="match status" value="7"/>
</dbReference>
<dbReference type="Gene3D" id="2.30.38.10">
    <property type="entry name" value="Luciferase, Domain 3"/>
    <property type="match status" value="1"/>
</dbReference>
<dbReference type="Gene3D" id="3.40.50.12780">
    <property type="entry name" value="N-terminal domain of ligase-like"/>
    <property type="match status" value="5"/>
</dbReference>
<dbReference type="Gene3D" id="3.30.559.30">
    <property type="entry name" value="Nonribosomal peptide synthetase, condensation domain"/>
    <property type="match status" value="7"/>
</dbReference>
<dbReference type="InterPro" id="IPR010071">
    <property type="entry name" value="AA_adenyl_dom"/>
</dbReference>
<dbReference type="InterPro" id="IPR036736">
    <property type="entry name" value="ACP-like_sf"/>
</dbReference>
<dbReference type="InterPro" id="IPR045851">
    <property type="entry name" value="AMP-bd_C_sf"/>
</dbReference>
<dbReference type="InterPro" id="IPR020845">
    <property type="entry name" value="AMP-binding_CS"/>
</dbReference>
<dbReference type="InterPro" id="IPR000873">
    <property type="entry name" value="AMP-dep_synth/lig_dom"/>
</dbReference>
<dbReference type="InterPro" id="IPR042099">
    <property type="entry name" value="ANL_N_sf"/>
</dbReference>
<dbReference type="InterPro" id="IPR023213">
    <property type="entry name" value="CAT-like_dom_sf"/>
</dbReference>
<dbReference type="InterPro" id="IPR001242">
    <property type="entry name" value="Condensatn"/>
</dbReference>
<dbReference type="InterPro" id="IPR020806">
    <property type="entry name" value="PKS_PP-bd"/>
</dbReference>
<dbReference type="InterPro" id="IPR009081">
    <property type="entry name" value="PP-bd_ACP"/>
</dbReference>
<dbReference type="InterPro" id="IPR006162">
    <property type="entry name" value="Ppantetheine_attach_site"/>
</dbReference>
<dbReference type="NCBIfam" id="TIGR01733">
    <property type="entry name" value="AA-adenyl-dom"/>
    <property type="match status" value="6"/>
</dbReference>
<dbReference type="NCBIfam" id="NF003417">
    <property type="entry name" value="PRK04813.1"/>
    <property type="match status" value="6"/>
</dbReference>
<dbReference type="PANTHER" id="PTHR45527:SF16">
    <property type="entry name" value="NONRIBOSOMAL PEPTIDE SYNTHASE ATNA-RELATED"/>
    <property type="match status" value="1"/>
</dbReference>
<dbReference type="PANTHER" id="PTHR45527">
    <property type="entry name" value="NONRIBOSOMAL PEPTIDE SYNTHETASE"/>
    <property type="match status" value="1"/>
</dbReference>
<dbReference type="Pfam" id="PF00501">
    <property type="entry name" value="AMP-binding"/>
    <property type="match status" value="6"/>
</dbReference>
<dbReference type="Pfam" id="PF00668">
    <property type="entry name" value="Condensation"/>
    <property type="match status" value="7"/>
</dbReference>
<dbReference type="Pfam" id="PF00550">
    <property type="entry name" value="PP-binding"/>
    <property type="match status" value="7"/>
</dbReference>
<dbReference type="SMART" id="SM00823">
    <property type="entry name" value="PKS_PP"/>
    <property type="match status" value="6"/>
</dbReference>
<dbReference type="SMART" id="SM01294">
    <property type="entry name" value="PKS_PP_betabranch"/>
    <property type="match status" value="1"/>
</dbReference>
<dbReference type="SUPFAM" id="SSF56801">
    <property type="entry name" value="Acetyl-CoA synthetase-like"/>
    <property type="match status" value="6"/>
</dbReference>
<dbReference type="SUPFAM" id="SSF47336">
    <property type="entry name" value="ACP-like"/>
    <property type="match status" value="7"/>
</dbReference>
<dbReference type="SUPFAM" id="SSF52777">
    <property type="entry name" value="CoA-dependent acyltransferases"/>
    <property type="match status" value="14"/>
</dbReference>
<dbReference type="PROSITE" id="PS00455">
    <property type="entry name" value="AMP_BINDING"/>
    <property type="match status" value="5"/>
</dbReference>
<dbReference type="PROSITE" id="PS50075">
    <property type="entry name" value="CARRIER"/>
    <property type="match status" value="7"/>
</dbReference>
<dbReference type="PROSITE" id="PS00012">
    <property type="entry name" value="PHOSPHOPANTETHEINE"/>
    <property type="match status" value="4"/>
</dbReference>
<name>ECDA_ASPRU</name>
<comment type="function">
    <text evidence="4">Nonribosomal peptide synthetase; part of the gene cluster that mediates the biosynthesis of echinocandin B, a fungal lipidated cyclic hexapeptide that acts as an antifungal agent (PubMed:22998630). Linoleoyl-AMP, produced by the fatty-acyl-AMP ligase ecdI, is transferred to the initiation carrier domain (T0) of ecdA (PubMed:22998630). The linoleoyl-S-phosphopantetheinyl-T0 is sequentially extended with L-ornithine, L-threonine, L-proline, L-homotyrosine, L-threonine, and 4R-methyl-L-proline to form the linear hexapeptide (PubMed:22998630). Thereafter, the terminal condensation (C7) performs macrocyclization of the NRPS product and the cyclic scaffold is released from ecdA (PubMed:22998630). All six of the amino acid residues are hydroxylated, including 4R,5R-dihydroxy-L-ornithine, 4R-hydroxyl-L-proline, 3S,4S-dihydroxy-L-homotyrosine, and 3S-hydroxyl-4S-methyl-L-prolin (PubMed:22998630). In the pathway, all the hydroxylation reactions are proposed to occur following completion of the cyclic peptide, so the unhydroxylated precursor produced by ecdA will undergo six rounds of hydroxylation (PubMed:22998630). Five hydroxylase genes (ecdG, ecdH, ecdK, htyE and htyF) are embedded within the echinocandin B (ecd) and L-homotyrosine (hty) clusters (PubMed:22998630).</text>
</comment>
<comment type="biophysicochemical properties">
    <kinetics>
        <KM evidence="4">45.4 uM for L-ornithine (L-Orn) (by adenylation 1 domain)</KM>
        <KM evidence="4">2.7 mM for 4-OH-L-Orn (by adenylation 1 domain)</KM>
    </kinetics>
</comment>
<comment type="pathway">
    <text evidence="4">Antifungal biosynthesis.</text>
</comment>
<comment type="domain">
    <text evidence="4">The NRPS ecdA is a multimodular enzymatic assembly that contains 20 domains With the following architecture: T0-CAT1-CAT2-CAT3-CAT4-CAT5-CAT6-C7 (PubMed:22998630). The initiation carrier domain (T0) binds linoleoyl-AMP prodiced by ecd I (PubMed:22998630). The 6 CAT modules correspond respectively to each of the 6 amino acid monomers incorporated (L-ornithine, L-threonine, L-proline, L-homotyrosine, L-threonine, and 4R-methyl-L-proline) (PubMed:22998630). Finally the last condensation domain (C7) performs the macrocyclization of the linear hexapeptide (PubMed:22998630).</text>
</comment>
<comment type="disruption phenotype">
    <text evidence="4">Impairs the production of echinocandin B (PubMed:22998630).</text>
</comment>
<comment type="biotechnology">
    <text evidence="4">Due to their effectiveness as antifungal agents, echinocandin derivatives can be used for the treatment of human invasive candidiasis (PubMed:22998630).</text>
</comment>
<comment type="similarity">
    <text evidence="6">Belongs to the NRP synthetase family.</text>
</comment>
<accession>K0E4D7</accession>
<evidence type="ECO:0000255" key="1"/>
<evidence type="ECO:0000255" key="2">
    <source>
        <dbReference type="PROSITE-ProRule" id="PRU00258"/>
    </source>
</evidence>
<evidence type="ECO:0000256" key="3">
    <source>
        <dbReference type="SAM" id="MobiDB-lite"/>
    </source>
</evidence>
<evidence type="ECO:0000269" key="4">
    <source>
    </source>
</evidence>
<evidence type="ECO:0000303" key="5">
    <source>
    </source>
</evidence>
<evidence type="ECO:0000305" key="6"/>
<evidence type="ECO:0000305" key="7">
    <source>
    </source>
</evidence>